<keyword id="KW-1003">Cell membrane</keyword>
<keyword id="KW-0966">Cell projection</keyword>
<keyword id="KW-0868">Chloride</keyword>
<keyword id="KW-0869">Chloride channel</keyword>
<keyword id="KW-0967">Endosome</keyword>
<keyword id="KW-0325">Glycoprotein</keyword>
<keyword id="KW-0407">Ion channel</keyword>
<keyword id="KW-0406">Ion transport</keyword>
<keyword id="KW-1071">Ligand-gated ion channel</keyword>
<keyword id="KW-0458">Lysosome</keyword>
<keyword id="KW-0472">Membrane</keyword>
<keyword id="KW-1185">Reference proteome</keyword>
<keyword id="KW-0732">Signal</keyword>
<keyword id="KW-0812">Transmembrane</keyword>
<keyword id="KW-1133">Transmembrane helix</keyword>
<keyword id="KW-0813">Transport</keyword>
<comment type="function">
    <text evidence="4 5 6">Ligand and pH-gated channel that mediates chloride transport primarily in the mid-gut and thereby functions in larval metabolism and fluid homeostasis (PubMed:27172217, PubMed:27358471, PubMed:32269334). Channel opening is triggered by zinc binding or, to a lesser extent, an increase in extracellular pH (PubMed:27358471, PubMed:32269334). Zinc-dependent activity in the mid-gut is required for modulating Tor-dependent metabolic programs that promote larval feeding and systematic growth (PubMed:32269334). It may therefore act as an intestinal zinc sensor that mediates larval growth and metabolism in response to micronutrient availability (PubMed:32269334). Activates Tor signaling via its activity in maintaining lysosome homeostasis in interstitial cells and/or by its role in activating the release of insulin-like peptides in the brain after feeding, via an unknown mechanism (PubMed:32269334). Functions in lysosome homeostasis by regulating chloride transport into enterocyte lysosomes to sustain V-ATPase function which maintains lysosomal acidification and consequently promotes Tor activation at the lysosome membrane (PubMed:32269334). Also appears to play a role in regulating fluid secretion and osmotic homeostasis in Malpighian tubules in response to the pH of extracellular urine (PubMed:27358471). This function is important for proper urine production during diuresis (PubMed:27358471).</text>
</comment>
<comment type="catalytic activity">
    <reaction evidence="5 6">
        <text>chloride(in) = chloride(out)</text>
        <dbReference type="Rhea" id="RHEA:29823"/>
        <dbReference type="ChEBI" id="CHEBI:17996"/>
    </reaction>
    <physiologicalReaction direction="left-to-right" evidence="10">
        <dbReference type="Rhea" id="RHEA:29824"/>
    </physiologicalReaction>
</comment>
<comment type="subcellular location">
    <subcellularLocation>
        <location evidence="5 6">Apical cell membrane</location>
        <topology evidence="1">Multi-pass membrane protein</topology>
    </subcellularLocation>
    <subcellularLocation>
        <location evidence="6">Cell projection</location>
        <location evidence="6">Microvillus membrane</location>
        <topology evidence="1">Multi-pass membrane protein</topology>
    </subcellularLocation>
    <subcellularLocation>
        <location evidence="6">Late endosome membrane</location>
        <topology evidence="1">Multi-pass membrane protein</topology>
    </subcellularLocation>
    <subcellularLocation>
        <location evidence="6">Lysosome membrane</location>
        <topology evidence="1">Multi-pass membrane protein</topology>
    </subcellularLocation>
    <text evidence="6">Enriched on the apical side of gut interstitial cells; on the brush-border and on the lysosomes.</text>
</comment>
<comment type="tissue specificity">
    <text evidence="4 5 6">In third-instar larvae, expressed in the principal cells of the excretory Malpighian tubules (at protein level) (PubMed:27358471, PubMed:32269334). Also detected in the enterocytes of the copper cell region and the iron cell region of the larval midgut (at protein level) (PubMed:32269334). In the copper cell region expression is confined to the interstitial cells and in the iron cell region it is expressed in the anterior portion (at protein level) (PubMed:32269334). Expressed in the Malpighian tubules and the middle midgut of third instar larvae and adults (PubMed:27172217).</text>
</comment>
<comment type="disruption phenotype">
    <text evidence="4 6">Larval lethal (PubMed:32269334). Larval development is delayed due to decreased food intake and reduced systematic insulin signaling (PubMed:32269334). However, escapers eventually attain a normal size during the pupal and adult stages (PubMed:32269334). Unlike in wild-type larvae, mutants do not develop a preference for zinc supplemented food or eat more when fed a zinc rich diet (PubMed:32269334). The copper cell region of the larval midgut displays developmental and functional defects such as reduced luminal acidity, increased bacterial titers and enlarged cell volume (PubMed:32269334). The interstitial cells also display increased cell volume due to reduced basal infolding (PubMed:32269334). They also display an increased tolerance to copper but not zinc, likely due to increased cell acidity which has been found to decrease copper uptake (PubMed:27172217). Postembryonic knockdown specifically in interstitial and Malpighian tubule principal cells also results in reduced food intake and increased time to pupation, whereas knockdown only in principal cells, iron cells or copper cells has no effect on larval development (PubMed:32269334). Mutants display a further increase in developmental delay in a Tor RNAi-mediated background (PubMed:32269334).</text>
</comment>
<comment type="miscellaneous">
    <text evidence="8">The name 'hodor' is an acronym for 'hold on, don't rush', referring to the developmental delay phenotype in mutants.</text>
</comment>
<comment type="similarity">
    <text evidence="9">Belongs to the ligand-gated ion channel (TC 1.A.9) family.</text>
</comment>
<comment type="sequence caution" evidence="9">
    <conflict type="miscellaneous discrepancy">
        <sequence resource="EMBL-CDS" id="ADO51077"/>
    </conflict>
    <text>Probable cloning artifact.</text>
</comment>
<proteinExistence type="evidence at protein level"/>
<reference evidence="13" key="1">
    <citation type="journal article" date="2000" name="Science">
        <title>The genome sequence of Drosophila melanogaster.</title>
        <authorList>
            <person name="Adams M.D."/>
            <person name="Celniker S.E."/>
            <person name="Holt R.A."/>
            <person name="Evans C.A."/>
            <person name="Gocayne J.D."/>
            <person name="Amanatides P.G."/>
            <person name="Scherer S.E."/>
            <person name="Li P.W."/>
            <person name="Hoskins R.A."/>
            <person name="Galle R.F."/>
            <person name="George R.A."/>
            <person name="Lewis S.E."/>
            <person name="Richards S."/>
            <person name="Ashburner M."/>
            <person name="Henderson S.N."/>
            <person name="Sutton G.G."/>
            <person name="Wortman J.R."/>
            <person name="Yandell M.D."/>
            <person name="Zhang Q."/>
            <person name="Chen L.X."/>
            <person name="Brandon R.C."/>
            <person name="Rogers Y.-H.C."/>
            <person name="Blazej R.G."/>
            <person name="Champe M."/>
            <person name="Pfeiffer B.D."/>
            <person name="Wan K.H."/>
            <person name="Doyle C."/>
            <person name="Baxter E.G."/>
            <person name="Helt G."/>
            <person name="Nelson C.R."/>
            <person name="Miklos G.L.G."/>
            <person name="Abril J.F."/>
            <person name="Agbayani A."/>
            <person name="An H.-J."/>
            <person name="Andrews-Pfannkoch C."/>
            <person name="Baldwin D."/>
            <person name="Ballew R.M."/>
            <person name="Basu A."/>
            <person name="Baxendale J."/>
            <person name="Bayraktaroglu L."/>
            <person name="Beasley E.M."/>
            <person name="Beeson K.Y."/>
            <person name="Benos P.V."/>
            <person name="Berman B.P."/>
            <person name="Bhandari D."/>
            <person name="Bolshakov S."/>
            <person name="Borkova D."/>
            <person name="Botchan M.R."/>
            <person name="Bouck J."/>
            <person name="Brokstein P."/>
            <person name="Brottier P."/>
            <person name="Burtis K.C."/>
            <person name="Busam D.A."/>
            <person name="Butler H."/>
            <person name="Cadieu E."/>
            <person name="Center A."/>
            <person name="Chandra I."/>
            <person name="Cherry J.M."/>
            <person name="Cawley S."/>
            <person name="Dahlke C."/>
            <person name="Davenport L.B."/>
            <person name="Davies P."/>
            <person name="de Pablos B."/>
            <person name="Delcher A."/>
            <person name="Deng Z."/>
            <person name="Mays A.D."/>
            <person name="Dew I."/>
            <person name="Dietz S.M."/>
            <person name="Dodson K."/>
            <person name="Doup L.E."/>
            <person name="Downes M."/>
            <person name="Dugan-Rocha S."/>
            <person name="Dunkov B.C."/>
            <person name="Dunn P."/>
            <person name="Durbin K.J."/>
            <person name="Evangelista C.C."/>
            <person name="Ferraz C."/>
            <person name="Ferriera S."/>
            <person name="Fleischmann W."/>
            <person name="Fosler C."/>
            <person name="Gabrielian A.E."/>
            <person name="Garg N.S."/>
            <person name="Gelbart W.M."/>
            <person name="Glasser K."/>
            <person name="Glodek A."/>
            <person name="Gong F."/>
            <person name="Gorrell J.H."/>
            <person name="Gu Z."/>
            <person name="Guan P."/>
            <person name="Harris M."/>
            <person name="Harris N.L."/>
            <person name="Harvey D.A."/>
            <person name="Heiman T.J."/>
            <person name="Hernandez J.R."/>
            <person name="Houck J."/>
            <person name="Hostin D."/>
            <person name="Houston K.A."/>
            <person name="Howland T.J."/>
            <person name="Wei M.-H."/>
            <person name="Ibegwam C."/>
            <person name="Jalali M."/>
            <person name="Kalush F."/>
            <person name="Karpen G.H."/>
            <person name="Ke Z."/>
            <person name="Kennison J.A."/>
            <person name="Ketchum K.A."/>
            <person name="Kimmel B.E."/>
            <person name="Kodira C.D."/>
            <person name="Kraft C.L."/>
            <person name="Kravitz S."/>
            <person name="Kulp D."/>
            <person name="Lai Z."/>
            <person name="Lasko P."/>
            <person name="Lei Y."/>
            <person name="Levitsky A.A."/>
            <person name="Li J.H."/>
            <person name="Li Z."/>
            <person name="Liang Y."/>
            <person name="Lin X."/>
            <person name="Liu X."/>
            <person name="Mattei B."/>
            <person name="McIntosh T.C."/>
            <person name="McLeod M.P."/>
            <person name="McPherson D."/>
            <person name="Merkulov G."/>
            <person name="Milshina N.V."/>
            <person name="Mobarry C."/>
            <person name="Morris J."/>
            <person name="Moshrefi A."/>
            <person name="Mount S.M."/>
            <person name="Moy M."/>
            <person name="Murphy B."/>
            <person name="Murphy L."/>
            <person name="Muzny D.M."/>
            <person name="Nelson D.L."/>
            <person name="Nelson D.R."/>
            <person name="Nelson K.A."/>
            <person name="Nixon K."/>
            <person name="Nusskern D.R."/>
            <person name="Pacleb J.M."/>
            <person name="Palazzolo M."/>
            <person name="Pittman G.S."/>
            <person name="Pan S."/>
            <person name="Pollard J."/>
            <person name="Puri V."/>
            <person name="Reese M.G."/>
            <person name="Reinert K."/>
            <person name="Remington K."/>
            <person name="Saunders R.D.C."/>
            <person name="Scheeler F."/>
            <person name="Shen H."/>
            <person name="Shue B.C."/>
            <person name="Siden-Kiamos I."/>
            <person name="Simpson M."/>
            <person name="Skupski M.P."/>
            <person name="Smith T.J."/>
            <person name="Spier E."/>
            <person name="Spradling A.C."/>
            <person name="Stapleton M."/>
            <person name="Strong R."/>
            <person name="Sun E."/>
            <person name="Svirskas R."/>
            <person name="Tector C."/>
            <person name="Turner R."/>
            <person name="Venter E."/>
            <person name="Wang A.H."/>
            <person name="Wang X."/>
            <person name="Wang Z.-Y."/>
            <person name="Wassarman D.A."/>
            <person name="Weinstock G.M."/>
            <person name="Weissenbach J."/>
            <person name="Williams S.M."/>
            <person name="Woodage T."/>
            <person name="Worley K.C."/>
            <person name="Wu D."/>
            <person name="Yang S."/>
            <person name="Yao Q.A."/>
            <person name="Ye J."/>
            <person name="Yeh R.-F."/>
            <person name="Zaveri J.S."/>
            <person name="Zhan M."/>
            <person name="Zhang G."/>
            <person name="Zhao Q."/>
            <person name="Zheng L."/>
            <person name="Zheng X.H."/>
            <person name="Zhong F.N."/>
            <person name="Zhong W."/>
            <person name="Zhou X."/>
            <person name="Zhu S.C."/>
            <person name="Zhu X."/>
            <person name="Smith H.O."/>
            <person name="Gibbs R.A."/>
            <person name="Myers E.W."/>
            <person name="Rubin G.M."/>
            <person name="Venter J.C."/>
        </authorList>
    </citation>
    <scope>NUCLEOTIDE SEQUENCE [LARGE SCALE GENOMIC DNA]</scope>
    <source>
        <strain evidence="13">Berkeley</strain>
    </source>
</reference>
<reference evidence="13" key="2">
    <citation type="journal article" date="2002" name="Genome Biol.">
        <title>Annotation of the Drosophila melanogaster euchromatic genome: a systematic review.</title>
        <authorList>
            <person name="Misra S."/>
            <person name="Crosby M.A."/>
            <person name="Mungall C.J."/>
            <person name="Matthews B.B."/>
            <person name="Campbell K.S."/>
            <person name="Hradecky P."/>
            <person name="Huang Y."/>
            <person name="Kaminker J.S."/>
            <person name="Millburn G.H."/>
            <person name="Prochnik S.E."/>
            <person name="Smith C.D."/>
            <person name="Tupy J.L."/>
            <person name="Whitfield E.J."/>
            <person name="Bayraktaroglu L."/>
            <person name="Berman B.P."/>
            <person name="Bettencourt B.R."/>
            <person name="Celniker S.E."/>
            <person name="de Grey A.D.N.J."/>
            <person name="Drysdale R.A."/>
            <person name="Harris N.L."/>
            <person name="Richter J."/>
            <person name="Russo S."/>
            <person name="Schroeder A.J."/>
            <person name="Shu S.Q."/>
            <person name="Stapleton M."/>
            <person name="Yamada C."/>
            <person name="Ashburner M."/>
            <person name="Gelbart W.M."/>
            <person name="Rubin G.M."/>
            <person name="Lewis S.E."/>
        </authorList>
    </citation>
    <scope>GENOME REANNOTATION</scope>
    <source>
        <strain evidence="13">Berkeley</strain>
    </source>
</reference>
<reference evidence="11" key="3">
    <citation type="submission" date="2010-10" db="EMBL/GenBank/DDBJ databases">
        <authorList>
            <person name="Carlson J."/>
            <person name="Booth B."/>
            <person name="Frise E."/>
            <person name="Sandler J."/>
            <person name="Wan K."/>
            <person name="Yu C."/>
            <person name="Celniker S."/>
        </authorList>
    </citation>
    <scope>NUCLEOTIDE SEQUENCE [LARGE SCALE MRNA] OF 92-526</scope>
</reference>
<reference evidence="9" key="4">
    <citation type="journal article" date="2016" name="G3 (Bethesda)">
        <title>Evolution, Expression, and Function of Nonneuronal Ligand-Gated Chloride Channels in Drosophila melanogaster.</title>
        <authorList>
            <person name="Remnant E.J."/>
            <person name="Williams A."/>
            <person name="Lumb C."/>
            <person name="Yang Y.T."/>
            <person name="Chan J."/>
            <person name="Duchene S."/>
            <person name="Daborn P.J."/>
            <person name="Batterham P."/>
            <person name="Perry T."/>
        </authorList>
    </citation>
    <scope>FUNCTION</scope>
    <scope>TISSUE SPECIFICITY</scope>
    <scope>DISRUPTION PHENOTYPE</scope>
</reference>
<reference evidence="9" key="5">
    <citation type="journal article" date="2016" name="J. Exp. Biol.">
        <title>The orphan pentameric ligand-gated ion channel pHCl-2 is gated by pH and regulates fluid secretion in Drosophila Malpighian tubules.</title>
        <authorList>
            <person name="Feingold D."/>
            <person name="Starc T."/>
            <person name="O'Donnell M.J."/>
            <person name="Nilson L."/>
            <person name="Dent J.A."/>
        </authorList>
    </citation>
    <scope>FUNCTION</scope>
    <scope>CATALYTIC ACTIVITY</scope>
    <scope>SUBCELLULAR LOCATION</scope>
    <scope>TISSUE SPECIFICITY</scope>
    <scope>DISRUPTION PHENOTYPE</scope>
</reference>
<reference evidence="9" key="6">
    <citation type="journal article" date="2020" name="Nature">
        <title>An intestinal zinc sensor regulates food intake and developmental growth.</title>
        <authorList>
            <person name="Redhai S."/>
            <person name="Pilgrim C."/>
            <person name="Gaspar P."/>
            <person name="Giesen L.V."/>
            <person name="Lopes T."/>
            <person name="Riabinina O."/>
            <person name="Grenier T."/>
            <person name="Milona A."/>
            <person name="Chanana B."/>
            <person name="Swadling J.B."/>
            <person name="Wang Y.F."/>
            <person name="Dahalan F."/>
            <person name="Yuan M."/>
            <person name="Wilsch-Brauninger M."/>
            <person name="Lin W.H."/>
            <person name="Dennison N."/>
            <person name="Capriotti P."/>
            <person name="Lawniczak M.K.N."/>
            <person name="Baines R.A."/>
            <person name="Warnecke T."/>
            <person name="Windbichler N."/>
            <person name="Leulier F."/>
            <person name="Bellono N.W."/>
            <person name="Miguel-Aliaga I."/>
        </authorList>
    </citation>
    <scope>FUNCTION</scope>
    <scope>CATALYTIC ACTIVITY</scope>
    <scope>SUBCELLULAR LOCATION</scope>
    <scope>TISSUE SPECIFICITY</scope>
    <scope>DISRUPTION PHENOTYPE</scope>
    <scope>MUTAGENESIS OF GLU-255 AND GLU-296</scope>
</reference>
<feature type="signal peptide" evidence="1">
    <location>
        <begin position="1"/>
        <end position="18"/>
    </location>
</feature>
<feature type="chain" id="PRO_5015100030" description="pH-sensitive chloride channel 2">
    <location>
        <begin position="19"/>
        <end position="526"/>
    </location>
</feature>
<feature type="topological domain" description="Extracellular" evidence="9">
    <location>
        <begin position="19"/>
        <end position="300"/>
    </location>
</feature>
<feature type="transmembrane region" description="Helical; Name=1" evidence="1">
    <location>
        <begin position="301"/>
        <end position="321"/>
    </location>
</feature>
<feature type="topological domain" description="Cytoplasmic" evidence="9">
    <location>
        <begin position="322"/>
        <end position="327"/>
    </location>
</feature>
<feature type="transmembrane region" description="Helical; Name=2" evidence="1">
    <location>
        <begin position="328"/>
        <end position="347"/>
    </location>
</feature>
<feature type="topological domain" description="Extracellular" evidence="9">
    <location>
        <begin position="348"/>
        <end position="360"/>
    </location>
</feature>
<feature type="transmembrane region" description="Helical; Name=3" evidence="1">
    <location>
        <begin position="361"/>
        <end position="381"/>
    </location>
</feature>
<feature type="topological domain" description="Cytoplasmic" evidence="9">
    <location>
        <begin position="382"/>
        <end position="505"/>
    </location>
</feature>
<feature type="transmembrane region" description="Helical; Name=4" evidence="1">
    <location>
        <begin position="506"/>
        <end position="526"/>
    </location>
</feature>
<feature type="region of interest" description="Disordered" evidence="3">
    <location>
        <begin position="463"/>
        <end position="488"/>
    </location>
</feature>
<feature type="glycosylation site" description="N-linked (GlcNAc...) asparagine" evidence="2">
    <location>
        <position position="33"/>
    </location>
</feature>
<feature type="glycosylation site" description="N-linked (GlcNAc...) asparagine" evidence="2">
    <location>
        <position position="42"/>
    </location>
</feature>
<feature type="glycosylation site" description="N-linked (GlcNAc...) asparagine" evidence="2">
    <location>
        <position position="52"/>
    </location>
</feature>
<feature type="glycosylation site" description="N-linked (GlcNAc...) asparagine" evidence="2">
    <location>
        <position position="192"/>
    </location>
</feature>
<feature type="glycosylation site" description="N-linked (GlcNAc...) asparagine" evidence="2">
    <location>
        <position position="231"/>
    </location>
</feature>
<feature type="glycosylation site" description="N-linked (GlcNAc...) asparagine" evidence="2">
    <location>
        <position position="264"/>
    </location>
</feature>
<feature type="glycosylation site" description="N-linked (GlcNAc...) asparagine" evidence="2">
    <location>
        <position position="271"/>
    </location>
</feature>
<feature type="glycosylation site" description="N-linked (GlcNAc...) asparagine" evidence="2">
    <location>
        <position position="283"/>
    </location>
</feature>
<feature type="mutagenesis site" description="Results in zinc-elicited currents with increased rise time and deactivation kinetics in Xenopus oocytes; when associated with F-296." evidence="6">
    <original>E</original>
    <variation>K</variation>
    <location>
        <position position="255"/>
    </location>
</feature>
<feature type="mutagenesis site" description="Results in zinc-elicited currents with increased rise time and deactivation kinetics in Xenopus oocytes; when associated with K-255." evidence="6">
    <original>E</original>
    <variation>F</variation>
    <location>
        <position position="296"/>
    </location>
</feature>
<feature type="sequence conflict" description="In Ref. 3; ADO51077." evidence="9" ref="3">
    <original>Y</original>
    <variation>H</variation>
    <location>
        <position position="299"/>
    </location>
</feature>
<gene>
    <name evidence="7 12" type="primary">pHCl-2</name>
    <name evidence="8" type="synonym">hodor</name>
    <name evidence="12" type="ORF">CG11340</name>
</gene>
<organism evidence="13">
    <name type="scientific">Drosophila melanogaster</name>
    <name type="common">Fruit fly</name>
    <dbReference type="NCBI Taxonomy" id="7227"/>
    <lineage>
        <taxon>Eukaryota</taxon>
        <taxon>Metazoa</taxon>
        <taxon>Ecdysozoa</taxon>
        <taxon>Arthropoda</taxon>
        <taxon>Hexapoda</taxon>
        <taxon>Insecta</taxon>
        <taxon>Pterygota</taxon>
        <taxon>Neoptera</taxon>
        <taxon>Endopterygota</taxon>
        <taxon>Diptera</taxon>
        <taxon>Brachycera</taxon>
        <taxon>Muscomorpha</taxon>
        <taxon>Ephydroidea</taxon>
        <taxon>Drosophilidae</taxon>
        <taxon>Drosophila</taxon>
        <taxon>Sophophora</taxon>
    </lineage>
</organism>
<dbReference type="EMBL" id="AE014297">
    <property type="protein sequence ID" value="AAF57144.1"/>
    <property type="molecule type" value="Genomic_DNA"/>
</dbReference>
<dbReference type="EMBL" id="AE014297">
    <property type="protein sequence ID" value="ALI30655.1"/>
    <property type="molecule type" value="Genomic_DNA"/>
</dbReference>
<dbReference type="EMBL" id="BT125715">
    <property type="protein sequence ID" value="ADO51077.1"/>
    <property type="status" value="ALT_SEQ"/>
    <property type="molecule type" value="mRNA"/>
</dbReference>
<dbReference type="RefSeq" id="NP_001303470.1">
    <property type="nucleotide sequence ID" value="NM_001316541.1"/>
</dbReference>
<dbReference type="RefSeq" id="NP_651861.1">
    <property type="nucleotide sequence ID" value="NM_143604.3"/>
</dbReference>
<dbReference type="SMR" id="Q9V9Y4"/>
<dbReference type="IntAct" id="Q9V9Y4">
    <property type="interactions" value="1"/>
</dbReference>
<dbReference type="STRING" id="7227.FBpp0312576"/>
<dbReference type="GlyCosmos" id="Q9V9Y4">
    <property type="glycosylation" value="8 sites, No reported glycans"/>
</dbReference>
<dbReference type="GlyGen" id="Q9V9Y4">
    <property type="glycosylation" value="8 sites"/>
</dbReference>
<dbReference type="PaxDb" id="7227-FBpp0085128"/>
<dbReference type="EnsemblMetazoa" id="FBtr0085766">
    <property type="protein sequence ID" value="FBpp0085128"/>
    <property type="gene ID" value="FBgn0039840"/>
</dbReference>
<dbReference type="EnsemblMetazoa" id="FBtr0347502">
    <property type="protein sequence ID" value="FBpp0312576"/>
    <property type="gene ID" value="FBgn0039840"/>
</dbReference>
<dbReference type="GeneID" id="43703"/>
<dbReference type="KEGG" id="dme:Dmel_CG11340"/>
<dbReference type="UCSC" id="CG11340-RA">
    <property type="organism name" value="d. melanogaster"/>
</dbReference>
<dbReference type="AGR" id="FB:FBgn0039840"/>
<dbReference type="CTD" id="43703"/>
<dbReference type="FlyBase" id="FBgn0039840">
    <property type="gene designation" value="pHCl-2"/>
</dbReference>
<dbReference type="VEuPathDB" id="VectorBase:FBgn0039840"/>
<dbReference type="eggNOG" id="KOG3644">
    <property type="taxonomic scope" value="Eukaryota"/>
</dbReference>
<dbReference type="GeneTree" id="ENSGT00940000168665"/>
<dbReference type="HOGENOM" id="CLU_010920_0_1_1"/>
<dbReference type="InParanoid" id="Q9V9Y4"/>
<dbReference type="OMA" id="CTVFIFG"/>
<dbReference type="OrthoDB" id="3176171at2759"/>
<dbReference type="PhylomeDB" id="Q9V9Y4"/>
<dbReference type="Reactome" id="R-DME-112314">
    <property type="pathway name" value="Neurotransmitter receptors and postsynaptic signal transmission"/>
</dbReference>
<dbReference type="BioGRID-ORCS" id="43703">
    <property type="hits" value="0 hits in 1 CRISPR screen"/>
</dbReference>
<dbReference type="GenomeRNAi" id="43703"/>
<dbReference type="PRO" id="PR:Q9V9Y4"/>
<dbReference type="Proteomes" id="UP000000803">
    <property type="component" value="Chromosome 3R"/>
</dbReference>
<dbReference type="Bgee" id="FBgn0039840">
    <property type="expression patterns" value="Expressed in adult anterior midgut class I enteroendocrine cell in adult midgut (Drosophila) and 15 other cell types or tissues"/>
</dbReference>
<dbReference type="GO" id="GO:0016324">
    <property type="term" value="C:apical plasma membrane"/>
    <property type="evidence" value="ECO:0000314"/>
    <property type="project" value="UniProtKB"/>
</dbReference>
<dbReference type="GO" id="GO:0031526">
    <property type="term" value="C:brush border membrane"/>
    <property type="evidence" value="ECO:0000314"/>
    <property type="project" value="UniProtKB"/>
</dbReference>
<dbReference type="GO" id="GO:0034707">
    <property type="term" value="C:chloride channel complex"/>
    <property type="evidence" value="ECO:0007669"/>
    <property type="project" value="UniProtKB-KW"/>
</dbReference>
<dbReference type="GO" id="GO:0031902">
    <property type="term" value="C:late endosome membrane"/>
    <property type="evidence" value="ECO:0000314"/>
    <property type="project" value="UniProtKB"/>
</dbReference>
<dbReference type="GO" id="GO:0005765">
    <property type="term" value="C:lysosomal membrane"/>
    <property type="evidence" value="ECO:0000314"/>
    <property type="project" value="UniProtKB"/>
</dbReference>
<dbReference type="GO" id="GO:0031528">
    <property type="term" value="C:microvillus membrane"/>
    <property type="evidence" value="ECO:0007669"/>
    <property type="project" value="UniProtKB-SubCell"/>
</dbReference>
<dbReference type="GO" id="GO:0098794">
    <property type="term" value="C:postsynapse"/>
    <property type="evidence" value="ECO:0007669"/>
    <property type="project" value="GOC"/>
</dbReference>
<dbReference type="GO" id="GO:1902495">
    <property type="term" value="C:transmembrane transporter complex"/>
    <property type="evidence" value="ECO:0000314"/>
    <property type="project" value="FlyBase"/>
</dbReference>
<dbReference type="GO" id="GO:0005254">
    <property type="term" value="F:chloride channel activity"/>
    <property type="evidence" value="ECO:0000314"/>
    <property type="project" value="UniProtKB"/>
</dbReference>
<dbReference type="GO" id="GO:0005231">
    <property type="term" value="F:excitatory extracellular ligand-gated monoatomic ion channel activity"/>
    <property type="evidence" value="ECO:0000314"/>
    <property type="project" value="UniProtKB"/>
</dbReference>
<dbReference type="GO" id="GO:0061797">
    <property type="term" value="F:pH-gated chloride channel activity"/>
    <property type="evidence" value="ECO:0000314"/>
    <property type="project" value="FlyBase"/>
</dbReference>
<dbReference type="GO" id="GO:0004888">
    <property type="term" value="F:transmembrane signaling receptor activity"/>
    <property type="evidence" value="ECO:0007669"/>
    <property type="project" value="InterPro"/>
</dbReference>
<dbReference type="GO" id="GO:0106219">
    <property type="term" value="F:zinc ion sensor activity"/>
    <property type="evidence" value="ECO:0000314"/>
    <property type="project" value="UniProtKB"/>
</dbReference>
<dbReference type="GO" id="GO:0071294">
    <property type="term" value="P:cellular response to zinc ion"/>
    <property type="evidence" value="ECO:0000315"/>
    <property type="project" value="UniProtKB"/>
</dbReference>
<dbReference type="GO" id="GO:1902476">
    <property type="term" value="P:chloride transmembrane transport"/>
    <property type="evidence" value="ECO:0000314"/>
    <property type="project" value="FlyBase"/>
</dbReference>
<dbReference type="GO" id="GO:0043568">
    <property type="term" value="P:positive regulation of insulin-like growth factor receptor signaling pathway"/>
    <property type="evidence" value="ECO:0000315"/>
    <property type="project" value="UniProtKB"/>
</dbReference>
<dbReference type="GO" id="GO:1904263">
    <property type="term" value="P:positive regulation of TORC1 signaling"/>
    <property type="evidence" value="ECO:0000315"/>
    <property type="project" value="UniProtKB"/>
</dbReference>
<dbReference type="GO" id="GO:2001151">
    <property type="term" value="P:regulation of renal water transport"/>
    <property type="evidence" value="ECO:0000315"/>
    <property type="project" value="FlyBase"/>
</dbReference>
<dbReference type="CDD" id="cd18987">
    <property type="entry name" value="LGIC_ECD_anion"/>
    <property type="match status" value="1"/>
</dbReference>
<dbReference type="CDD" id="cd19049">
    <property type="entry name" value="LGIC_TM_anion"/>
    <property type="match status" value="1"/>
</dbReference>
<dbReference type="FunFam" id="2.70.170.10:FF:000042">
    <property type="entry name" value="Blast:Glycine receptor subunit alpha-3"/>
    <property type="match status" value="1"/>
</dbReference>
<dbReference type="Gene3D" id="2.70.170.10">
    <property type="entry name" value="Neurotransmitter-gated ion-channel ligand-binding domain"/>
    <property type="match status" value="1"/>
</dbReference>
<dbReference type="Gene3D" id="1.20.58.390">
    <property type="entry name" value="Neurotransmitter-gated ion-channel transmembrane domain"/>
    <property type="match status" value="1"/>
</dbReference>
<dbReference type="InterPro" id="IPR006028">
    <property type="entry name" value="GABAA/Glycine_rcpt"/>
</dbReference>
<dbReference type="InterPro" id="IPR006202">
    <property type="entry name" value="Neur_chan_lig-bd"/>
</dbReference>
<dbReference type="InterPro" id="IPR036734">
    <property type="entry name" value="Neur_chan_lig-bd_sf"/>
</dbReference>
<dbReference type="InterPro" id="IPR006201">
    <property type="entry name" value="Neur_channel"/>
</dbReference>
<dbReference type="InterPro" id="IPR036719">
    <property type="entry name" value="Neuro-gated_channel_TM_sf"/>
</dbReference>
<dbReference type="InterPro" id="IPR038050">
    <property type="entry name" value="Neuro_actylchol_rec"/>
</dbReference>
<dbReference type="InterPro" id="IPR006029">
    <property type="entry name" value="Neurotrans-gated_channel_TM"/>
</dbReference>
<dbReference type="InterPro" id="IPR018000">
    <property type="entry name" value="Neurotransmitter_ion_chnl_CS"/>
</dbReference>
<dbReference type="PANTHER" id="PTHR18945">
    <property type="entry name" value="NEUROTRANSMITTER GATED ION CHANNEL"/>
    <property type="match status" value="1"/>
</dbReference>
<dbReference type="Pfam" id="PF02931">
    <property type="entry name" value="Neur_chan_LBD"/>
    <property type="match status" value="1"/>
</dbReference>
<dbReference type="Pfam" id="PF02932">
    <property type="entry name" value="Neur_chan_memb"/>
    <property type="match status" value="1"/>
</dbReference>
<dbReference type="PRINTS" id="PR00253">
    <property type="entry name" value="GABAARECEPTR"/>
</dbReference>
<dbReference type="PRINTS" id="PR00252">
    <property type="entry name" value="NRIONCHANNEL"/>
</dbReference>
<dbReference type="SUPFAM" id="SSF90112">
    <property type="entry name" value="Neurotransmitter-gated ion-channel transmembrane pore"/>
    <property type="match status" value="1"/>
</dbReference>
<dbReference type="SUPFAM" id="SSF63712">
    <property type="entry name" value="Nicotinic receptor ligand binding domain-like"/>
    <property type="match status" value="1"/>
</dbReference>
<dbReference type="PROSITE" id="PS00236">
    <property type="entry name" value="NEUROTR_ION_CHANNEL"/>
    <property type="match status" value="1"/>
</dbReference>
<accession>Q9V9Y4</accession>
<accession>E3CTP9</accession>
<protein>
    <recommendedName>
        <fullName evidence="7">pH-sensitive chloride channel 2</fullName>
    </recommendedName>
    <alternativeName>
        <fullName evidence="8">Ligand-gated chloride channel protein hodor</fullName>
    </alternativeName>
</protein>
<evidence type="ECO:0000255" key="1"/>
<evidence type="ECO:0000255" key="2">
    <source>
        <dbReference type="PROSITE-ProRule" id="PRU00498"/>
    </source>
</evidence>
<evidence type="ECO:0000256" key="3">
    <source>
        <dbReference type="SAM" id="MobiDB-lite"/>
    </source>
</evidence>
<evidence type="ECO:0000269" key="4">
    <source>
    </source>
</evidence>
<evidence type="ECO:0000269" key="5">
    <source>
    </source>
</evidence>
<evidence type="ECO:0000269" key="6">
    <source>
    </source>
</evidence>
<evidence type="ECO:0000303" key="7">
    <source>
    </source>
</evidence>
<evidence type="ECO:0000303" key="8">
    <source>
    </source>
</evidence>
<evidence type="ECO:0000305" key="9"/>
<evidence type="ECO:0000305" key="10">
    <source>
    </source>
</evidence>
<evidence type="ECO:0000312" key="11">
    <source>
        <dbReference type="EMBL" id="ADO51077.1"/>
    </source>
</evidence>
<evidence type="ECO:0000312" key="12">
    <source>
        <dbReference type="FlyBase" id="FBgn0039840"/>
    </source>
</evidence>
<evidence type="ECO:0000312" key="13">
    <source>
        <dbReference type="Proteomes" id="UP000000803"/>
    </source>
</evidence>
<sequence length="526" mass="59826">MDTLGIFVLISYLGLSSAAGVHLGDLQQNLAANGSVVVSPLNTTDAFSVSINLSQSTVNNCPSLKNAESMALMELLTRLTAPCRYDRMVPPVVHNKDGEEVPMDIYARFYIYVMKNLDSSDLQFTVQGLLQLRYLDPRLAFSSYLPNRRQPIMGESELKKMLWVPHIFLTNEQASTVLGTSAKDELTSIYPNGTVLTSTRLQATLYCWMNFQKFPFDEQKCKTTLESWMYNTTLVQLHWETDNPVSFDKQLQLTEYNLIGSLYNESIRVSNESYMSHGSLEGNYSIISFTVLLTREVGYYVIDYFLPSIMIVTISWVSFWLQADQTPARTTLGCTTLLSFITLSLSQENNLMKVSYVTMSEVWFLVCTIFIFGSLVEFAFVNTIWRRNNDLQLKKRTTKYIVKSTFVPHLKKHRRHGYRRTDSTMSTMSTTSMDKTCGPNNTVITIETPIIIGGSLSREDSAISLDEQDETSTSESSDSSKEKPAQTFATMTPKEVSLWIDRKMRFVFPLSFIVFNALFWTLVYCL</sequence>
<name>PHCL2_DROME</name>